<dbReference type="EMBL" id="CP000544">
    <property type="protein sequence ID" value="ABM62002.1"/>
    <property type="molecule type" value="Genomic_DNA"/>
</dbReference>
<dbReference type="RefSeq" id="WP_011814025.1">
    <property type="nucleotide sequence ID" value="NC_008789.1"/>
</dbReference>
<dbReference type="SMR" id="A1WWE0"/>
<dbReference type="STRING" id="349124.Hhal_1227"/>
<dbReference type="KEGG" id="hha:Hhal_1227"/>
<dbReference type="eggNOG" id="COG0593">
    <property type="taxonomic scope" value="Bacteria"/>
</dbReference>
<dbReference type="HOGENOM" id="CLU_026910_0_1_6"/>
<dbReference type="Proteomes" id="UP000000647">
    <property type="component" value="Chromosome"/>
</dbReference>
<dbReference type="GO" id="GO:0005737">
    <property type="term" value="C:cytoplasm"/>
    <property type="evidence" value="ECO:0007669"/>
    <property type="project" value="UniProtKB-SubCell"/>
</dbReference>
<dbReference type="GO" id="GO:0005886">
    <property type="term" value="C:plasma membrane"/>
    <property type="evidence" value="ECO:0007669"/>
    <property type="project" value="TreeGrafter"/>
</dbReference>
<dbReference type="GO" id="GO:0005524">
    <property type="term" value="F:ATP binding"/>
    <property type="evidence" value="ECO:0007669"/>
    <property type="project" value="UniProtKB-UniRule"/>
</dbReference>
<dbReference type="GO" id="GO:0016887">
    <property type="term" value="F:ATP hydrolysis activity"/>
    <property type="evidence" value="ECO:0007669"/>
    <property type="project" value="InterPro"/>
</dbReference>
<dbReference type="GO" id="GO:0003688">
    <property type="term" value="F:DNA replication origin binding"/>
    <property type="evidence" value="ECO:0007669"/>
    <property type="project" value="UniProtKB-UniRule"/>
</dbReference>
<dbReference type="GO" id="GO:0008289">
    <property type="term" value="F:lipid binding"/>
    <property type="evidence" value="ECO:0007669"/>
    <property type="project" value="UniProtKB-KW"/>
</dbReference>
<dbReference type="GO" id="GO:0006270">
    <property type="term" value="P:DNA replication initiation"/>
    <property type="evidence" value="ECO:0007669"/>
    <property type="project" value="UniProtKB-UniRule"/>
</dbReference>
<dbReference type="GO" id="GO:0006275">
    <property type="term" value="P:regulation of DNA replication"/>
    <property type="evidence" value="ECO:0007669"/>
    <property type="project" value="UniProtKB-UniRule"/>
</dbReference>
<dbReference type="CDD" id="cd00009">
    <property type="entry name" value="AAA"/>
    <property type="match status" value="1"/>
</dbReference>
<dbReference type="CDD" id="cd06571">
    <property type="entry name" value="Bac_DnaA_C"/>
    <property type="match status" value="1"/>
</dbReference>
<dbReference type="FunFam" id="1.10.8.60:FF:000003">
    <property type="entry name" value="Chromosomal replication initiator protein DnaA"/>
    <property type="match status" value="1"/>
</dbReference>
<dbReference type="FunFam" id="3.40.50.300:FF:000103">
    <property type="entry name" value="Chromosomal replication initiator protein DnaA"/>
    <property type="match status" value="1"/>
</dbReference>
<dbReference type="Gene3D" id="1.10.1750.10">
    <property type="match status" value="1"/>
</dbReference>
<dbReference type="Gene3D" id="1.10.8.60">
    <property type="match status" value="1"/>
</dbReference>
<dbReference type="Gene3D" id="3.30.300.180">
    <property type="match status" value="1"/>
</dbReference>
<dbReference type="Gene3D" id="3.40.50.300">
    <property type="entry name" value="P-loop containing nucleotide triphosphate hydrolases"/>
    <property type="match status" value="1"/>
</dbReference>
<dbReference type="HAMAP" id="MF_00377">
    <property type="entry name" value="DnaA_bact"/>
    <property type="match status" value="1"/>
</dbReference>
<dbReference type="InterPro" id="IPR003593">
    <property type="entry name" value="AAA+_ATPase"/>
</dbReference>
<dbReference type="InterPro" id="IPR001957">
    <property type="entry name" value="Chromosome_initiator_DnaA"/>
</dbReference>
<dbReference type="InterPro" id="IPR020591">
    <property type="entry name" value="Chromosome_initiator_DnaA-like"/>
</dbReference>
<dbReference type="InterPro" id="IPR018312">
    <property type="entry name" value="Chromosome_initiator_DnaA_CS"/>
</dbReference>
<dbReference type="InterPro" id="IPR013159">
    <property type="entry name" value="DnaA_C"/>
</dbReference>
<dbReference type="InterPro" id="IPR013317">
    <property type="entry name" value="DnaA_dom"/>
</dbReference>
<dbReference type="InterPro" id="IPR024633">
    <property type="entry name" value="DnaA_N_dom"/>
</dbReference>
<dbReference type="InterPro" id="IPR038454">
    <property type="entry name" value="DnaA_N_sf"/>
</dbReference>
<dbReference type="InterPro" id="IPR027417">
    <property type="entry name" value="P-loop_NTPase"/>
</dbReference>
<dbReference type="InterPro" id="IPR010921">
    <property type="entry name" value="Trp_repressor/repl_initiator"/>
</dbReference>
<dbReference type="NCBIfam" id="TIGR00362">
    <property type="entry name" value="DnaA"/>
    <property type="match status" value="1"/>
</dbReference>
<dbReference type="PANTHER" id="PTHR30050">
    <property type="entry name" value="CHROMOSOMAL REPLICATION INITIATOR PROTEIN DNAA"/>
    <property type="match status" value="1"/>
</dbReference>
<dbReference type="PANTHER" id="PTHR30050:SF2">
    <property type="entry name" value="CHROMOSOMAL REPLICATION INITIATOR PROTEIN DNAA"/>
    <property type="match status" value="1"/>
</dbReference>
<dbReference type="Pfam" id="PF00308">
    <property type="entry name" value="Bac_DnaA"/>
    <property type="match status" value="1"/>
</dbReference>
<dbReference type="Pfam" id="PF08299">
    <property type="entry name" value="Bac_DnaA_C"/>
    <property type="match status" value="1"/>
</dbReference>
<dbReference type="Pfam" id="PF11638">
    <property type="entry name" value="DnaA_N"/>
    <property type="match status" value="1"/>
</dbReference>
<dbReference type="PRINTS" id="PR00051">
    <property type="entry name" value="DNAA"/>
</dbReference>
<dbReference type="SMART" id="SM00382">
    <property type="entry name" value="AAA"/>
    <property type="match status" value="1"/>
</dbReference>
<dbReference type="SMART" id="SM00760">
    <property type="entry name" value="Bac_DnaA_C"/>
    <property type="match status" value="1"/>
</dbReference>
<dbReference type="SUPFAM" id="SSF52540">
    <property type="entry name" value="P-loop containing nucleoside triphosphate hydrolases"/>
    <property type="match status" value="1"/>
</dbReference>
<dbReference type="SUPFAM" id="SSF48295">
    <property type="entry name" value="TrpR-like"/>
    <property type="match status" value="1"/>
</dbReference>
<dbReference type="PROSITE" id="PS01008">
    <property type="entry name" value="DNAA"/>
    <property type="match status" value="1"/>
</dbReference>
<keyword id="KW-0067">ATP-binding</keyword>
<keyword id="KW-0963">Cytoplasm</keyword>
<keyword id="KW-0235">DNA replication</keyword>
<keyword id="KW-0238">DNA-binding</keyword>
<keyword id="KW-0446">Lipid-binding</keyword>
<keyword id="KW-0547">Nucleotide-binding</keyword>
<keyword id="KW-1185">Reference proteome</keyword>
<reference key="1">
    <citation type="submission" date="2006-12" db="EMBL/GenBank/DDBJ databases">
        <title>Complete sequence of Halorhodospira halophila SL1.</title>
        <authorList>
            <consortium name="US DOE Joint Genome Institute"/>
            <person name="Copeland A."/>
            <person name="Lucas S."/>
            <person name="Lapidus A."/>
            <person name="Barry K."/>
            <person name="Detter J.C."/>
            <person name="Glavina del Rio T."/>
            <person name="Hammon N."/>
            <person name="Israni S."/>
            <person name="Dalin E."/>
            <person name="Tice H."/>
            <person name="Pitluck S."/>
            <person name="Saunders E."/>
            <person name="Brettin T."/>
            <person name="Bruce D."/>
            <person name="Han C."/>
            <person name="Tapia R."/>
            <person name="Schmutz J."/>
            <person name="Larimer F."/>
            <person name="Land M."/>
            <person name="Hauser L."/>
            <person name="Kyrpides N."/>
            <person name="Mikhailova N."/>
            <person name="Hoff W."/>
            <person name="Richardson P."/>
        </authorList>
    </citation>
    <scope>NUCLEOTIDE SEQUENCE [LARGE SCALE GENOMIC DNA]</scope>
    <source>
        <strain>DSM 244 / SL1</strain>
    </source>
</reference>
<gene>
    <name evidence="1" type="primary">dnaA</name>
    <name type="ordered locus">Hhal_1227</name>
</gene>
<proteinExistence type="inferred from homology"/>
<accession>A1WWE0</accession>
<organism>
    <name type="scientific">Halorhodospira halophila (strain DSM 244 / SL1)</name>
    <name type="common">Ectothiorhodospira halophila (strain DSM 244 / SL1)</name>
    <dbReference type="NCBI Taxonomy" id="349124"/>
    <lineage>
        <taxon>Bacteria</taxon>
        <taxon>Pseudomonadati</taxon>
        <taxon>Pseudomonadota</taxon>
        <taxon>Gammaproteobacteria</taxon>
        <taxon>Chromatiales</taxon>
        <taxon>Ectothiorhodospiraceae</taxon>
        <taxon>Halorhodospira</taxon>
    </lineage>
</organism>
<sequence>MDDSLWSACLQQLEREIPEQQLNTWIRPLQAHLEGDALRLYAPNRFVLDWVRDNFSARIGELLAEIRPDEHLRVELEIGSPPTPDQREAATGATRAAPAQRSSEPRQRPVDSNLNPGFTFDSFVEGKSNQLARAASMQVADNPGGAYNPLFLYGGVGLGKTHLMHAVGNAIRTARPEARVLYLHSERFVAEMVKALQHNAINEFKRHYRNLDALLIDDIQFFAGKERSQEEFFHTFNALLESEQQVIMTCDRYPKEVNGLEERLKSRFGWGLTVAIEPPELETRVAILKSKAIRDGVDLPDEVAFFVAKRLRSNVRELEGALRRITANAQFTGRAIDVDFAKEALRDLLALQDKLVTIDNIQKTVAAYYKIRVGDLLSKRRSRSITRPRHMAMVLAKELTSHSLPEIGDAFGGRDHSTVLHACRNIKSLIEDDARLAEDYDNLLRTLST</sequence>
<comment type="function">
    <text evidence="1">Plays an essential role in the initiation and regulation of chromosomal replication. ATP-DnaA binds to the origin of replication (oriC) to initiate formation of the DNA replication initiation complex once per cell cycle. Binds the DnaA box (a 9 base pair repeat at the origin) and separates the double-stranded (ds)DNA. Forms a right-handed helical filament on oriC DNA; dsDNA binds to the exterior of the filament while single-stranded (ss)DNA is stabiized in the filament's interior. The ATP-DnaA-oriC complex binds and stabilizes one strand of the AT-rich DNA unwinding element (DUE), permitting loading of DNA polymerase. After initiation quickly degrades to an ADP-DnaA complex that is not apt for DNA replication. Binds acidic phospholipids.</text>
</comment>
<comment type="subunit">
    <text evidence="1">Oligomerizes as a right-handed, spiral filament on DNA at oriC.</text>
</comment>
<comment type="subcellular location">
    <subcellularLocation>
        <location evidence="1">Cytoplasm</location>
    </subcellularLocation>
</comment>
<comment type="domain">
    <text evidence="1">Domain I is involved in oligomerization and binding regulators, domain II is flexibile and of varying length in different bacteria, domain III forms the AAA+ region, while domain IV binds dsDNA.</text>
</comment>
<comment type="similarity">
    <text evidence="1">Belongs to the DnaA family.</text>
</comment>
<protein>
    <recommendedName>
        <fullName evidence="1">Chromosomal replication initiator protein DnaA</fullName>
    </recommendedName>
</protein>
<evidence type="ECO:0000255" key="1">
    <source>
        <dbReference type="HAMAP-Rule" id="MF_00377"/>
    </source>
</evidence>
<evidence type="ECO:0000256" key="2">
    <source>
        <dbReference type="SAM" id="MobiDB-lite"/>
    </source>
</evidence>
<name>DNAA_HALHL</name>
<feature type="chain" id="PRO_1000048653" description="Chromosomal replication initiator protein DnaA">
    <location>
        <begin position="1"/>
        <end position="449"/>
    </location>
</feature>
<feature type="region of interest" description="Domain I, interacts with DnaA modulators" evidence="1">
    <location>
        <begin position="1"/>
        <end position="83"/>
    </location>
</feature>
<feature type="region of interest" description="Disordered" evidence="2">
    <location>
        <begin position="77"/>
        <end position="114"/>
    </location>
</feature>
<feature type="region of interest" description="Domain II" evidence="1">
    <location>
        <begin position="83"/>
        <end position="112"/>
    </location>
</feature>
<feature type="region of interest" description="Domain III, AAA+ region" evidence="1">
    <location>
        <begin position="113"/>
        <end position="329"/>
    </location>
</feature>
<feature type="region of interest" description="Domain IV, binds dsDNA" evidence="1">
    <location>
        <begin position="330"/>
        <end position="449"/>
    </location>
</feature>
<feature type="compositionally biased region" description="Low complexity" evidence="2">
    <location>
        <begin position="89"/>
        <end position="99"/>
    </location>
</feature>
<feature type="binding site" evidence="1">
    <location>
        <position position="157"/>
    </location>
    <ligand>
        <name>ATP</name>
        <dbReference type="ChEBI" id="CHEBI:30616"/>
    </ligand>
</feature>
<feature type="binding site" evidence="1">
    <location>
        <position position="159"/>
    </location>
    <ligand>
        <name>ATP</name>
        <dbReference type="ChEBI" id="CHEBI:30616"/>
    </ligand>
</feature>
<feature type="binding site" evidence="1">
    <location>
        <position position="160"/>
    </location>
    <ligand>
        <name>ATP</name>
        <dbReference type="ChEBI" id="CHEBI:30616"/>
    </ligand>
</feature>
<feature type="binding site" evidence="1">
    <location>
        <position position="161"/>
    </location>
    <ligand>
        <name>ATP</name>
        <dbReference type="ChEBI" id="CHEBI:30616"/>
    </ligand>
</feature>